<proteinExistence type="evidence at transcript level"/>
<accession>Q0MQE7</accession>
<reference key="1">
    <citation type="journal article" date="2006" name="Gene">
        <title>Adaptive selection of mitochondrial complex I subunits during primate radiation.</title>
        <authorList>
            <person name="Mishmar D."/>
            <person name="Ruiz-Pesini E."/>
            <person name="Mondragon-Palomino M."/>
            <person name="Procaccio V."/>
            <person name="Gaut B."/>
            <person name="Wallace D.C."/>
        </authorList>
    </citation>
    <scope>NUCLEOTIDE SEQUENCE [MRNA]</scope>
</reference>
<sequence>MAVARAGVLGVQWLQRASRNVMPLGARTASHMTKDMFPGPYPRTPEERAAAAKKYNMRVEDYEPYPDDGMGYGDYPKLPDRSQHERDPWYSWDQPGLRLNWGEPMHWHLDMYNRNRVDTSPTPLSWHVMCMQLFGFLAFMIFMCWVGDVYPVYQPVGPKQYPYNNLYLERGGDPSKEPERVVHYEI</sequence>
<comment type="function">
    <text evidence="2">Accessory subunit of the mitochondrial membrane respiratory chain NADH dehydrogenase (Complex I), that is believed not to be involved in catalysis. Complex I functions in the transfer of electrons from NADH to the respiratory chain. The immediate electron acceptor for the enzyme is believed to be ubiquinone.</text>
</comment>
<comment type="subunit">
    <text evidence="2">Complex I is composed of 45 different subunits.</text>
</comment>
<comment type="subcellular location">
    <subcellularLocation>
        <location evidence="2">Mitochondrion inner membrane</location>
        <topology evidence="3">Single-pass membrane protein</topology>
        <orientation evidence="2">Matrix side</orientation>
    </subcellularLocation>
</comment>
<comment type="similarity">
    <text evidence="4">Belongs to the complex I NDUFB8 subunit family.</text>
</comment>
<name>NDUB8_PANTR</name>
<protein>
    <recommendedName>
        <fullName>NADH dehydrogenase [ubiquinone] 1 beta subcomplex subunit 8, mitochondrial</fullName>
    </recommendedName>
    <alternativeName>
        <fullName>Complex I-ASHI</fullName>
        <shortName>CI-ASHI</shortName>
    </alternativeName>
    <alternativeName>
        <fullName>NADH-ubiquinone oxidoreductase ASHI subunit</fullName>
    </alternativeName>
</protein>
<gene>
    <name type="primary">NDUFB8</name>
</gene>
<organism>
    <name type="scientific">Pan troglodytes</name>
    <name type="common">Chimpanzee</name>
    <dbReference type="NCBI Taxonomy" id="9598"/>
    <lineage>
        <taxon>Eukaryota</taxon>
        <taxon>Metazoa</taxon>
        <taxon>Chordata</taxon>
        <taxon>Craniata</taxon>
        <taxon>Vertebrata</taxon>
        <taxon>Euteleostomi</taxon>
        <taxon>Mammalia</taxon>
        <taxon>Eutheria</taxon>
        <taxon>Euarchontoglires</taxon>
        <taxon>Primates</taxon>
        <taxon>Haplorrhini</taxon>
        <taxon>Catarrhini</taxon>
        <taxon>Hominidae</taxon>
        <taxon>Pan</taxon>
    </lineage>
</organism>
<feature type="transit peptide" description="Mitochondrion" evidence="1">
    <location>
        <begin position="1"/>
        <end position="28"/>
    </location>
</feature>
<feature type="chain" id="PRO_0000251842" description="NADH dehydrogenase [ubiquinone] 1 beta subcomplex subunit 8, mitochondrial">
    <location>
        <begin position="29"/>
        <end position="186"/>
    </location>
</feature>
<feature type="transmembrane region" description="Helical" evidence="3">
    <location>
        <begin position="133"/>
        <end position="153"/>
    </location>
</feature>
<evidence type="ECO:0000250" key="1"/>
<evidence type="ECO:0000250" key="2">
    <source>
        <dbReference type="UniProtKB" id="O95169"/>
    </source>
</evidence>
<evidence type="ECO:0000255" key="3"/>
<evidence type="ECO:0000305" key="4"/>
<keyword id="KW-0249">Electron transport</keyword>
<keyword id="KW-0472">Membrane</keyword>
<keyword id="KW-0496">Mitochondrion</keyword>
<keyword id="KW-0999">Mitochondrion inner membrane</keyword>
<keyword id="KW-1185">Reference proteome</keyword>
<keyword id="KW-0679">Respiratory chain</keyword>
<keyword id="KW-0809">Transit peptide</keyword>
<keyword id="KW-0812">Transmembrane</keyword>
<keyword id="KW-1133">Transmembrane helix</keyword>
<keyword id="KW-0813">Transport</keyword>
<dbReference type="EMBL" id="DQ885687">
    <property type="protein sequence ID" value="ABH12196.1"/>
    <property type="molecule type" value="mRNA"/>
</dbReference>
<dbReference type="RefSeq" id="NP_001138336.1">
    <property type="nucleotide sequence ID" value="NM_001144864.1"/>
</dbReference>
<dbReference type="SMR" id="Q0MQE7"/>
<dbReference type="FunCoup" id="Q0MQE7">
    <property type="interactions" value="1295"/>
</dbReference>
<dbReference type="STRING" id="9598.ENSPTRP00000075507"/>
<dbReference type="PaxDb" id="9598-ENSPTRP00000005010"/>
<dbReference type="GeneID" id="744716"/>
<dbReference type="KEGG" id="ptr:744716"/>
<dbReference type="CTD" id="4714"/>
<dbReference type="eggNOG" id="KOG4040">
    <property type="taxonomic scope" value="Eukaryota"/>
</dbReference>
<dbReference type="HOGENOM" id="CLU_108654_1_0_1"/>
<dbReference type="InParanoid" id="Q0MQE7"/>
<dbReference type="OrthoDB" id="545at9604"/>
<dbReference type="TreeFam" id="TF317319"/>
<dbReference type="Proteomes" id="UP000002277">
    <property type="component" value="Unplaced"/>
</dbReference>
<dbReference type="GO" id="GO:0005743">
    <property type="term" value="C:mitochondrial inner membrane"/>
    <property type="evidence" value="ECO:0007669"/>
    <property type="project" value="UniProtKB-SubCell"/>
</dbReference>
<dbReference type="GO" id="GO:0045271">
    <property type="term" value="C:respiratory chain complex I"/>
    <property type="evidence" value="ECO:0000250"/>
    <property type="project" value="UniProtKB"/>
</dbReference>
<dbReference type="GO" id="GO:0006120">
    <property type="term" value="P:mitochondrial electron transport, NADH to ubiquinone"/>
    <property type="evidence" value="ECO:0007669"/>
    <property type="project" value="InterPro"/>
</dbReference>
<dbReference type="InterPro" id="IPR008699">
    <property type="entry name" value="NDUFB8"/>
</dbReference>
<dbReference type="InterPro" id="IPR016551">
    <property type="entry name" value="Ndufb8_metazoa"/>
</dbReference>
<dbReference type="PANTHER" id="PTHR12840:SF2">
    <property type="entry name" value="NADH DEHYDROGENASE [UBIQUINONE] 1 BETA SUBCOMPLEX SUBUNIT 8, MITOCHONDRIAL"/>
    <property type="match status" value="1"/>
</dbReference>
<dbReference type="PANTHER" id="PTHR12840">
    <property type="entry name" value="NADH-UBIQUINONE OXIDOREDUCTASE ASHI SUBUNIT"/>
    <property type="match status" value="1"/>
</dbReference>
<dbReference type="Pfam" id="PF05821">
    <property type="entry name" value="NDUF_B8"/>
    <property type="match status" value="1"/>
</dbReference>
<dbReference type="PIRSF" id="PIRSF009288">
    <property type="entry name" value="NDUB8"/>
    <property type="match status" value="1"/>
</dbReference>